<organism>
    <name type="scientific">Escherichia fergusonii (strain ATCC 35469 / DSM 13698 / CCUG 18766 / IAM 14443 / JCM 21226 / LMG 7866 / NBRC 102419 / NCTC 12128 / CDC 0568-73)</name>
    <dbReference type="NCBI Taxonomy" id="585054"/>
    <lineage>
        <taxon>Bacteria</taxon>
        <taxon>Pseudomonadati</taxon>
        <taxon>Pseudomonadota</taxon>
        <taxon>Gammaproteobacteria</taxon>
        <taxon>Enterobacterales</taxon>
        <taxon>Enterobacteriaceae</taxon>
        <taxon>Escherichia</taxon>
    </lineage>
</organism>
<comment type="function">
    <text evidence="1">Catalyzes the hydrolysis of 6-phosphogluconolactone to 6-phosphogluconate.</text>
</comment>
<comment type="catalytic activity">
    <reaction evidence="1">
        <text>6-phospho-D-glucono-1,5-lactone + H2O = 6-phospho-D-gluconate + H(+)</text>
        <dbReference type="Rhea" id="RHEA:12556"/>
        <dbReference type="ChEBI" id="CHEBI:15377"/>
        <dbReference type="ChEBI" id="CHEBI:15378"/>
        <dbReference type="ChEBI" id="CHEBI:57955"/>
        <dbReference type="ChEBI" id="CHEBI:58759"/>
        <dbReference type="EC" id="3.1.1.31"/>
    </reaction>
</comment>
<comment type="pathway">
    <text evidence="1">Carbohydrate degradation; pentose phosphate pathway; D-ribulose 5-phosphate from D-glucose 6-phosphate (oxidative stage): step 2/3.</text>
</comment>
<comment type="similarity">
    <text evidence="1">Belongs to the cycloisomerase 2 family.</text>
</comment>
<dbReference type="EC" id="3.1.1.31" evidence="1"/>
<dbReference type="EMBL" id="CU928158">
    <property type="protein sequence ID" value="CAQ89842.1"/>
    <property type="molecule type" value="Genomic_DNA"/>
</dbReference>
<dbReference type="RefSeq" id="WP_000815406.1">
    <property type="nucleotide sequence ID" value="NC_011740.1"/>
</dbReference>
<dbReference type="SMR" id="B7LJZ2"/>
<dbReference type="GeneID" id="75056629"/>
<dbReference type="KEGG" id="efe:EFER_2342"/>
<dbReference type="HOGENOM" id="CLU_038716_2_0_6"/>
<dbReference type="OrthoDB" id="9790815at2"/>
<dbReference type="UniPathway" id="UPA00115">
    <property type="reaction ID" value="UER00409"/>
</dbReference>
<dbReference type="Proteomes" id="UP000000745">
    <property type="component" value="Chromosome"/>
</dbReference>
<dbReference type="GO" id="GO:0005829">
    <property type="term" value="C:cytosol"/>
    <property type="evidence" value="ECO:0007669"/>
    <property type="project" value="TreeGrafter"/>
</dbReference>
<dbReference type="GO" id="GO:0017057">
    <property type="term" value="F:6-phosphogluconolactonase activity"/>
    <property type="evidence" value="ECO:0007669"/>
    <property type="project" value="UniProtKB-UniRule"/>
</dbReference>
<dbReference type="GO" id="GO:0006006">
    <property type="term" value="P:glucose metabolic process"/>
    <property type="evidence" value="ECO:0007669"/>
    <property type="project" value="UniProtKB-KW"/>
</dbReference>
<dbReference type="GO" id="GO:0009051">
    <property type="term" value="P:pentose-phosphate shunt, oxidative branch"/>
    <property type="evidence" value="ECO:0007669"/>
    <property type="project" value="UniProtKB-UniRule"/>
</dbReference>
<dbReference type="FunFam" id="2.130.10.10:FF:000051">
    <property type="entry name" value="6-phosphogluconolactonase"/>
    <property type="match status" value="1"/>
</dbReference>
<dbReference type="Gene3D" id="2.130.10.10">
    <property type="entry name" value="YVTN repeat-like/Quinoprotein amine dehydrogenase"/>
    <property type="match status" value="1"/>
</dbReference>
<dbReference type="HAMAP" id="MF_01605">
    <property type="entry name" value="6P_gluconolactonase"/>
    <property type="match status" value="1"/>
</dbReference>
<dbReference type="InterPro" id="IPR022528">
    <property type="entry name" value="6-phosphogluconolactonase_YbhE"/>
</dbReference>
<dbReference type="InterPro" id="IPR050282">
    <property type="entry name" value="Cycloisomerase_2"/>
</dbReference>
<dbReference type="InterPro" id="IPR019405">
    <property type="entry name" value="Lactonase_7-beta_prop"/>
</dbReference>
<dbReference type="InterPro" id="IPR011045">
    <property type="entry name" value="N2O_reductase_N"/>
</dbReference>
<dbReference type="InterPro" id="IPR015943">
    <property type="entry name" value="WD40/YVTN_repeat-like_dom_sf"/>
</dbReference>
<dbReference type="NCBIfam" id="NF008258">
    <property type="entry name" value="PRK11028.1"/>
    <property type="match status" value="1"/>
</dbReference>
<dbReference type="PANTHER" id="PTHR30344:SF1">
    <property type="entry name" value="6-PHOSPHOGLUCONOLACTONASE"/>
    <property type="match status" value="1"/>
</dbReference>
<dbReference type="PANTHER" id="PTHR30344">
    <property type="entry name" value="6-PHOSPHOGLUCONOLACTONASE-RELATED"/>
    <property type="match status" value="1"/>
</dbReference>
<dbReference type="Pfam" id="PF10282">
    <property type="entry name" value="Lactonase"/>
    <property type="match status" value="1"/>
</dbReference>
<dbReference type="SUPFAM" id="SSF50974">
    <property type="entry name" value="Nitrous oxide reductase, N-terminal domain"/>
    <property type="match status" value="1"/>
</dbReference>
<dbReference type="SUPFAM" id="SSF63825">
    <property type="entry name" value="YWTD domain"/>
    <property type="match status" value="1"/>
</dbReference>
<gene>
    <name evidence="1" type="primary">pgl</name>
    <name type="ordered locus">EFER_2342</name>
</gene>
<name>6PGL_ESCF3</name>
<protein>
    <recommendedName>
        <fullName evidence="1">6-phosphogluconolactonase</fullName>
        <shortName evidence="1">6-P-gluconolactonase</shortName>
        <ecNumber evidence="1">3.1.1.31</ecNumber>
    </recommendedName>
</protein>
<evidence type="ECO:0000255" key="1">
    <source>
        <dbReference type="HAMAP-Rule" id="MF_01605"/>
    </source>
</evidence>
<accession>B7LJZ2</accession>
<proteinExistence type="inferred from homology"/>
<keyword id="KW-0007">Acetylation</keyword>
<keyword id="KW-0119">Carbohydrate metabolism</keyword>
<keyword id="KW-0313">Glucose metabolism</keyword>
<keyword id="KW-0378">Hydrolase</keyword>
<reference key="1">
    <citation type="journal article" date="2009" name="PLoS Genet.">
        <title>Organised genome dynamics in the Escherichia coli species results in highly diverse adaptive paths.</title>
        <authorList>
            <person name="Touchon M."/>
            <person name="Hoede C."/>
            <person name="Tenaillon O."/>
            <person name="Barbe V."/>
            <person name="Baeriswyl S."/>
            <person name="Bidet P."/>
            <person name="Bingen E."/>
            <person name="Bonacorsi S."/>
            <person name="Bouchier C."/>
            <person name="Bouvet O."/>
            <person name="Calteau A."/>
            <person name="Chiapello H."/>
            <person name="Clermont O."/>
            <person name="Cruveiller S."/>
            <person name="Danchin A."/>
            <person name="Diard M."/>
            <person name="Dossat C."/>
            <person name="Karoui M.E."/>
            <person name="Frapy E."/>
            <person name="Garry L."/>
            <person name="Ghigo J.M."/>
            <person name="Gilles A.M."/>
            <person name="Johnson J."/>
            <person name="Le Bouguenec C."/>
            <person name="Lescat M."/>
            <person name="Mangenot S."/>
            <person name="Martinez-Jehanne V."/>
            <person name="Matic I."/>
            <person name="Nassif X."/>
            <person name="Oztas S."/>
            <person name="Petit M.A."/>
            <person name="Pichon C."/>
            <person name="Rouy Z."/>
            <person name="Ruf C.S."/>
            <person name="Schneider D."/>
            <person name="Tourret J."/>
            <person name="Vacherie B."/>
            <person name="Vallenet D."/>
            <person name="Medigue C."/>
            <person name="Rocha E.P.C."/>
            <person name="Denamur E."/>
        </authorList>
    </citation>
    <scope>NUCLEOTIDE SEQUENCE [LARGE SCALE GENOMIC DNA]</scope>
    <source>
        <strain>ATCC 35469 / DSM 13698 / BCRC 15582 / CCUG 18766 / IAM 14443 / JCM 21226 / LMG 7866 / NBRC 102419 / NCTC 12128 / CDC 0568-73</strain>
    </source>
</reference>
<sequence>MKQTVYIASPESQQIHVWNLNHDGTLTLTQVVDVPGQVQPMVVSPDKRYLYVGVRPEFRVLAYRIAPDDGALTFAAESALPGSPTHISTDHQGRFVFVGSYNAGSVSVTRLEDGLPVEVVDVVEGLDGCHSANITPDNRTLWVPALKQDRICLFTVSDDGYLAAQDPAEVTTVEGAGPRHMVFHPNEQYAYCVNELNSSVDVWELKDPHGNIECVQTLDMMPADFSDTRWAADIHITPDGRHLYACDRTASLITVFSVSEDGSVLTKEGYQSTETQPRGFNVDHSGKYLIAAGQKSHHIAVYEIHGEQGLLTEKGRYAVGQGPMWVVVNAH</sequence>
<feature type="chain" id="PRO_1000148159" description="6-phosphogluconolactonase">
    <location>
        <begin position="1"/>
        <end position="331"/>
    </location>
</feature>
<feature type="modified residue" description="N6-acetyllysine" evidence="1">
    <location>
        <position position="287"/>
    </location>
</feature>